<feature type="chain" id="PRO_0000257317" description="Ribosomal RNA small subunit methyltransferase A">
    <location>
        <begin position="1"/>
        <end position="262"/>
    </location>
</feature>
<feature type="binding site" evidence="1">
    <location>
        <position position="12"/>
    </location>
    <ligand>
        <name>S-adenosyl-L-methionine</name>
        <dbReference type="ChEBI" id="CHEBI:59789"/>
    </ligand>
</feature>
<feature type="binding site" evidence="1">
    <location>
        <position position="14"/>
    </location>
    <ligand>
        <name>S-adenosyl-L-methionine</name>
        <dbReference type="ChEBI" id="CHEBI:59789"/>
    </ligand>
</feature>
<feature type="binding site" evidence="1">
    <location>
        <position position="38"/>
    </location>
    <ligand>
        <name>S-adenosyl-L-methionine</name>
        <dbReference type="ChEBI" id="CHEBI:59789"/>
    </ligand>
</feature>
<feature type="binding site" evidence="1">
    <location>
        <position position="60"/>
    </location>
    <ligand>
        <name>S-adenosyl-L-methionine</name>
        <dbReference type="ChEBI" id="CHEBI:59789"/>
    </ligand>
</feature>
<feature type="binding site" evidence="1">
    <location>
        <position position="83"/>
    </location>
    <ligand>
        <name>S-adenosyl-L-methionine</name>
        <dbReference type="ChEBI" id="CHEBI:59789"/>
    </ligand>
</feature>
<feature type="binding site" evidence="1">
    <location>
        <position position="102"/>
    </location>
    <ligand>
        <name>S-adenosyl-L-methionine</name>
        <dbReference type="ChEBI" id="CHEBI:59789"/>
    </ligand>
</feature>
<proteinExistence type="inferred from homology"/>
<organism>
    <name type="scientific">Pelagibacter ubique (strain HTCC1062)</name>
    <dbReference type="NCBI Taxonomy" id="335992"/>
    <lineage>
        <taxon>Bacteria</taxon>
        <taxon>Pseudomonadati</taxon>
        <taxon>Pseudomonadota</taxon>
        <taxon>Alphaproteobacteria</taxon>
        <taxon>Candidatus Pelagibacterales</taxon>
        <taxon>Candidatus Pelagibacteraceae</taxon>
        <taxon>Candidatus Pelagibacter</taxon>
    </lineage>
</organism>
<comment type="function">
    <text evidence="1">Specifically dimethylates two adjacent adenosines (A1518 and A1519) in the loop of a conserved hairpin near the 3'-end of 16S rRNA in the 30S particle. May play a critical role in biogenesis of 30S subunits.</text>
</comment>
<comment type="catalytic activity">
    <reaction evidence="1">
        <text>adenosine(1518)/adenosine(1519) in 16S rRNA + 4 S-adenosyl-L-methionine = N(6)-dimethyladenosine(1518)/N(6)-dimethyladenosine(1519) in 16S rRNA + 4 S-adenosyl-L-homocysteine + 4 H(+)</text>
        <dbReference type="Rhea" id="RHEA:19609"/>
        <dbReference type="Rhea" id="RHEA-COMP:10232"/>
        <dbReference type="Rhea" id="RHEA-COMP:10233"/>
        <dbReference type="ChEBI" id="CHEBI:15378"/>
        <dbReference type="ChEBI" id="CHEBI:57856"/>
        <dbReference type="ChEBI" id="CHEBI:59789"/>
        <dbReference type="ChEBI" id="CHEBI:74411"/>
        <dbReference type="ChEBI" id="CHEBI:74493"/>
        <dbReference type="EC" id="2.1.1.182"/>
    </reaction>
</comment>
<comment type="subcellular location">
    <subcellularLocation>
        <location evidence="1">Cytoplasm</location>
    </subcellularLocation>
</comment>
<comment type="similarity">
    <text evidence="1">Belongs to the class I-like SAM-binding methyltransferase superfamily. rRNA adenine N(6)-methyltransferase family. RsmA subfamily.</text>
</comment>
<name>RSMA_PELUB</name>
<dbReference type="EC" id="2.1.1.182" evidence="1"/>
<dbReference type="EMBL" id="CP000084">
    <property type="protein sequence ID" value="AAZ21529.1"/>
    <property type="molecule type" value="Genomic_DNA"/>
</dbReference>
<dbReference type="RefSeq" id="WP_011281884.1">
    <property type="nucleotide sequence ID" value="NC_007205.1"/>
</dbReference>
<dbReference type="SMR" id="Q4FMR0"/>
<dbReference type="STRING" id="335992.SAR11_0710"/>
<dbReference type="GeneID" id="66295213"/>
<dbReference type="KEGG" id="pub:SAR11_0710"/>
<dbReference type="eggNOG" id="COG0030">
    <property type="taxonomic scope" value="Bacteria"/>
</dbReference>
<dbReference type="HOGENOM" id="CLU_041220_0_1_5"/>
<dbReference type="OrthoDB" id="9814755at2"/>
<dbReference type="Proteomes" id="UP000002528">
    <property type="component" value="Chromosome"/>
</dbReference>
<dbReference type="GO" id="GO:0005829">
    <property type="term" value="C:cytosol"/>
    <property type="evidence" value="ECO:0007669"/>
    <property type="project" value="TreeGrafter"/>
</dbReference>
<dbReference type="GO" id="GO:0052908">
    <property type="term" value="F:16S rRNA (adenine(1518)-N(6)/adenine(1519)-N(6))-dimethyltransferase activity"/>
    <property type="evidence" value="ECO:0007669"/>
    <property type="project" value="UniProtKB-EC"/>
</dbReference>
<dbReference type="GO" id="GO:0003723">
    <property type="term" value="F:RNA binding"/>
    <property type="evidence" value="ECO:0007669"/>
    <property type="project" value="UniProtKB-KW"/>
</dbReference>
<dbReference type="CDD" id="cd02440">
    <property type="entry name" value="AdoMet_MTases"/>
    <property type="match status" value="1"/>
</dbReference>
<dbReference type="Gene3D" id="1.10.8.100">
    <property type="entry name" value="Ribosomal RNA adenine dimethylase-like, domain 2"/>
    <property type="match status" value="1"/>
</dbReference>
<dbReference type="Gene3D" id="3.40.50.150">
    <property type="entry name" value="Vaccinia Virus protein VP39"/>
    <property type="match status" value="1"/>
</dbReference>
<dbReference type="HAMAP" id="MF_00607">
    <property type="entry name" value="16SrRNA_methyltr_A"/>
    <property type="match status" value="1"/>
</dbReference>
<dbReference type="InterPro" id="IPR001737">
    <property type="entry name" value="KsgA/Erm"/>
</dbReference>
<dbReference type="InterPro" id="IPR023165">
    <property type="entry name" value="rRNA_Ade_diMease-like_C"/>
</dbReference>
<dbReference type="InterPro" id="IPR020596">
    <property type="entry name" value="rRNA_Ade_Mease_Trfase_CS"/>
</dbReference>
<dbReference type="InterPro" id="IPR020598">
    <property type="entry name" value="rRNA_Ade_methylase_Trfase_N"/>
</dbReference>
<dbReference type="InterPro" id="IPR011530">
    <property type="entry name" value="rRNA_adenine_dimethylase"/>
</dbReference>
<dbReference type="InterPro" id="IPR029063">
    <property type="entry name" value="SAM-dependent_MTases_sf"/>
</dbReference>
<dbReference type="NCBIfam" id="TIGR00755">
    <property type="entry name" value="ksgA"/>
    <property type="match status" value="1"/>
</dbReference>
<dbReference type="PANTHER" id="PTHR11727">
    <property type="entry name" value="DIMETHYLADENOSINE TRANSFERASE"/>
    <property type="match status" value="1"/>
</dbReference>
<dbReference type="PANTHER" id="PTHR11727:SF7">
    <property type="entry name" value="DIMETHYLADENOSINE TRANSFERASE-RELATED"/>
    <property type="match status" value="1"/>
</dbReference>
<dbReference type="Pfam" id="PF00398">
    <property type="entry name" value="RrnaAD"/>
    <property type="match status" value="1"/>
</dbReference>
<dbReference type="SMART" id="SM00650">
    <property type="entry name" value="rADc"/>
    <property type="match status" value="1"/>
</dbReference>
<dbReference type="SUPFAM" id="SSF53335">
    <property type="entry name" value="S-adenosyl-L-methionine-dependent methyltransferases"/>
    <property type="match status" value="1"/>
</dbReference>
<dbReference type="PROSITE" id="PS01131">
    <property type="entry name" value="RRNA_A_DIMETH"/>
    <property type="match status" value="1"/>
</dbReference>
<dbReference type="PROSITE" id="PS51689">
    <property type="entry name" value="SAM_RNA_A_N6_MT"/>
    <property type="match status" value="1"/>
</dbReference>
<keyword id="KW-0963">Cytoplasm</keyword>
<keyword id="KW-0489">Methyltransferase</keyword>
<keyword id="KW-1185">Reference proteome</keyword>
<keyword id="KW-0694">RNA-binding</keyword>
<keyword id="KW-0698">rRNA processing</keyword>
<keyword id="KW-0949">S-adenosyl-L-methionine</keyword>
<keyword id="KW-0808">Transferase</keyword>
<accession>Q4FMR0</accession>
<reference key="1">
    <citation type="journal article" date="2005" name="Science">
        <title>Genome streamlining in a cosmopolitan oceanic bacterium.</title>
        <authorList>
            <person name="Giovannoni S.J."/>
            <person name="Tripp H.J."/>
            <person name="Givan S."/>
            <person name="Podar M."/>
            <person name="Vergin K.L."/>
            <person name="Baptista D."/>
            <person name="Bibbs L."/>
            <person name="Eads J."/>
            <person name="Richardson T.H."/>
            <person name="Noordewier M."/>
            <person name="Rappe M.S."/>
            <person name="Short J.M."/>
            <person name="Carrington J.C."/>
            <person name="Mathur E.J."/>
        </authorList>
    </citation>
    <scope>NUCLEOTIDE SEQUENCE [LARGE SCALE GENOMIC DNA]</scope>
    <source>
        <strain>HTCC1062</strain>
    </source>
</reference>
<evidence type="ECO:0000255" key="1">
    <source>
        <dbReference type="HAMAP-Rule" id="MF_00607"/>
    </source>
</evidence>
<sequence>MFVKAKKSLGQNFLIDREVLEKIVSITDITNKEVLEIGPGSGNLTTYILKKKPKKLYVVEKDDDLAILLKEKFDTEIKIINDDILKVSESTISDQKLSVFGNLPYNISTEILSKWILNIGSNFWFDSLVLMFQKEVADRIISEFNNSNYGRLSILSSWKLNVKKILDIKPQSFSPRPKIDSSLLLFTPKENFFKLKDPKNLEKITRIFFSQRRKMLKKPFNQVFDNGKEVAEKFGIDLNLRPQNLEPDVYFKLVKEYEDLRG</sequence>
<gene>
    <name evidence="1" type="primary">rsmA</name>
    <name evidence="1" type="synonym">ksgA</name>
    <name type="ordered locus">SAR11_0710</name>
</gene>
<protein>
    <recommendedName>
        <fullName evidence="1">Ribosomal RNA small subunit methyltransferase A</fullName>
        <ecNumber evidence="1">2.1.1.182</ecNumber>
    </recommendedName>
    <alternativeName>
        <fullName evidence="1">16S rRNA (adenine(1518)-N(6)/adenine(1519)-N(6))-dimethyltransferase</fullName>
    </alternativeName>
    <alternativeName>
        <fullName evidence="1">16S rRNA dimethyladenosine transferase</fullName>
    </alternativeName>
    <alternativeName>
        <fullName evidence="1">16S rRNA dimethylase</fullName>
    </alternativeName>
    <alternativeName>
        <fullName evidence="1">S-adenosylmethionine-6-N', N'-adenosyl(rRNA) dimethyltransferase</fullName>
    </alternativeName>
</protein>